<name>RL11_RHOBA</name>
<evidence type="ECO:0000255" key="1">
    <source>
        <dbReference type="HAMAP-Rule" id="MF_00736"/>
    </source>
</evidence>
<evidence type="ECO:0000256" key="2">
    <source>
        <dbReference type="SAM" id="MobiDB-lite"/>
    </source>
</evidence>
<evidence type="ECO:0000305" key="3"/>
<dbReference type="EMBL" id="BX294146">
    <property type="protein sequence ID" value="CAD75637.1"/>
    <property type="molecule type" value="Genomic_DNA"/>
</dbReference>
<dbReference type="RefSeq" id="NP_868085.1">
    <property type="nucleotide sequence ID" value="NC_005027.1"/>
</dbReference>
<dbReference type="RefSeq" id="WP_007324993.1">
    <property type="nucleotide sequence ID" value="NC_005027.1"/>
</dbReference>
<dbReference type="SMR" id="Q7UMY7"/>
<dbReference type="FunCoup" id="Q7UMY7">
    <property type="interactions" value="597"/>
</dbReference>
<dbReference type="STRING" id="243090.RB7899"/>
<dbReference type="EnsemblBacteria" id="CAD75637">
    <property type="protein sequence ID" value="CAD75637"/>
    <property type="gene ID" value="RB7899"/>
</dbReference>
<dbReference type="GeneID" id="90608473"/>
<dbReference type="KEGG" id="rba:RB7899"/>
<dbReference type="PATRIC" id="fig|243090.15.peg.3819"/>
<dbReference type="eggNOG" id="COG0080">
    <property type="taxonomic scope" value="Bacteria"/>
</dbReference>
<dbReference type="HOGENOM" id="CLU_074237_2_1_0"/>
<dbReference type="InParanoid" id="Q7UMY7"/>
<dbReference type="OrthoDB" id="9802408at2"/>
<dbReference type="Proteomes" id="UP000001025">
    <property type="component" value="Chromosome"/>
</dbReference>
<dbReference type="GO" id="GO:0022625">
    <property type="term" value="C:cytosolic large ribosomal subunit"/>
    <property type="evidence" value="ECO:0000318"/>
    <property type="project" value="GO_Central"/>
</dbReference>
<dbReference type="GO" id="GO:0070180">
    <property type="term" value="F:large ribosomal subunit rRNA binding"/>
    <property type="evidence" value="ECO:0000318"/>
    <property type="project" value="GO_Central"/>
</dbReference>
<dbReference type="GO" id="GO:0003735">
    <property type="term" value="F:structural constituent of ribosome"/>
    <property type="evidence" value="ECO:0000318"/>
    <property type="project" value="GO_Central"/>
</dbReference>
<dbReference type="GO" id="GO:0006412">
    <property type="term" value="P:translation"/>
    <property type="evidence" value="ECO:0000318"/>
    <property type="project" value="GO_Central"/>
</dbReference>
<dbReference type="CDD" id="cd00349">
    <property type="entry name" value="Ribosomal_L11"/>
    <property type="match status" value="1"/>
</dbReference>
<dbReference type="FunFam" id="1.10.10.250:FF:000001">
    <property type="entry name" value="50S ribosomal protein L11"/>
    <property type="match status" value="1"/>
</dbReference>
<dbReference type="FunFam" id="3.30.1550.10:FF:000006">
    <property type="entry name" value="50S ribosomal protein L11"/>
    <property type="match status" value="1"/>
</dbReference>
<dbReference type="Gene3D" id="1.10.10.250">
    <property type="entry name" value="Ribosomal protein L11, C-terminal domain"/>
    <property type="match status" value="1"/>
</dbReference>
<dbReference type="Gene3D" id="3.30.1550.10">
    <property type="entry name" value="Ribosomal protein L11/L12, N-terminal domain"/>
    <property type="match status" value="1"/>
</dbReference>
<dbReference type="HAMAP" id="MF_00736">
    <property type="entry name" value="Ribosomal_uL11"/>
    <property type="match status" value="1"/>
</dbReference>
<dbReference type="InterPro" id="IPR000911">
    <property type="entry name" value="Ribosomal_uL11"/>
</dbReference>
<dbReference type="InterPro" id="IPR006519">
    <property type="entry name" value="Ribosomal_uL11_bac-typ"/>
</dbReference>
<dbReference type="InterPro" id="IPR020783">
    <property type="entry name" value="Ribosomal_uL11_C"/>
</dbReference>
<dbReference type="InterPro" id="IPR036769">
    <property type="entry name" value="Ribosomal_uL11_C_sf"/>
</dbReference>
<dbReference type="InterPro" id="IPR020785">
    <property type="entry name" value="Ribosomal_uL11_CS"/>
</dbReference>
<dbReference type="InterPro" id="IPR020784">
    <property type="entry name" value="Ribosomal_uL11_N"/>
</dbReference>
<dbReference type="InterPro" id="IPR036796">
    <property type="entry name" value="Ribosomal_uL11_N_sf"/>
</dbReference>
<dbReference type="NCBIfam" id="TIGR01632">
    <property type="entry name" value="L11_bact"/>
    <property type="match status" value="1"/>
</dbReference>
<dbReference type="PANTHER" id="PTHR11661">
    <property type="entry name" value="60S RIBOSOMAL PROTEIN L12"/>
    <property type="match status" value="1"/>
</dbReference>
<dbReference type="PANTHER" id="PTHR11661:SF1">
    <property type="entry name" value="LARGE RIBOSOMAL SUBUNIT PROTEIN UL11M"/>
    <property type="match status" value="1"/>
</dbReference>
<dbReference type="Pfam" id="PF00298">
    <property type="entry name" value="Ribosomal_L11"/>
    <property type="match status" value="1"/>
</dbReference>
<dbReference type="Pfam" id="PF03946">
    <property type="entry name" value="Ribosomal_L11_N"/>
    <property type="match status" value="1"/>
</dbReference>
<dbReference type="SMART" id="SM00649">
    <property type="entry name" value="RL11"/>
    <property type="match status" value="1"/>
</dbReference>
<dbReference type="SUPFAM" id="SSF54747">
    <property type="entry name" value="Ribosomal L11/L12e N-terminal domain"/>
    <property type="match status" value="1"/>
</dbReference>
<dbReference type="SUPFAM" id="SSF46906">
    <property type="entry name" value="Ribosomal protein L11, C-terminal domain"/>
    <property type="match status" value="1"/>
</dbReference>
<dbReference type="PROSITE" id="PS00359">
    <property type="entry name" value="RIBOSOMAL_L11"/>
    <property type="match status" value="1"/>
</dbReference>
<reference key="1">
    <citation type="journal article" date="2003" name="Proc. Natl. Acad. Sci. U.S.A.">
        <title>Complete genome sequence of the marine planctomycete Pirellula sp. strain 1.</title>
        <authorList>
            <person name="Gloeckner F.O."/>
            <person name="Kube M."/>
            <person name="Bauer M."/>
            <person name="Teeling H."/>
            <person name="Lombardot T."/>
            <person name="Ludwig W."/>
            <person name="Gade D."/>
            <person name="Beck A."/>
            <person name="Borzym K."/>
            <person name="Heitmann K."/>
            <person name="Rabus R."/>
            <person name="Schlesner H."/>
            <person name="Amann R."/>
            <person name="Reinhardt R."/>
        </authorList>
    </citation>
    <scope>NUCLEOTIDE SEQUENCE [LARGE SCALE GENOMIC DNA]</scope>
    <source>
        <strain>DSM 10527 / NCIMB 13988 / SH1</strain>
    </source>
</reference>
<gene>
    <name evidence="1" type="primary">rplK</name>
    <name type="ordered locus">RB7899</name>
</gene>
<comment type="function">
    <text evidence="1">Forms part of the ribosomal stalk which helps the ribosome interact with GTP-bound translation factors.</text>
</comment>
<comment type="subunit">
    <text evidence="1">Part of the ribosomal stalk of the 50S ribosomal subunit. Interacts with L10 and the large rRNA to form the base of the stalk. L10 forms an elongated spine to which L12 dimers bind in a sequential fashion forming a multimeric L10(L12)X complex.</text>
</comment>
<comment type="PTM">
    <text evidence="1">One or more lysine residues are methylated.</text>
</comment>
<comment type="similarity">
    <text evidence="1">Belongs to the universal ribosomal protein uL11 family.</text>
</comment>
<feature type="chain" id="PRO_0000104349" description="Large ribosomal subunit protein uL11">
    <location>
        <begin position="1"/>
        <end position="141"/>
    </location>
</feature>
<feature type="region of interest" description="Disordered" evidence="2">
    <location>
        <begin position="1"/>
        <end position="23"/>
    </location>
</feature>
<protein>
    <recommendedName>
        <fullName evidence="1">Large ribosomal subunit protein uL11</fullName>
    </recommendedName>
    <alternativeName>
        <fullName evidence="3">50S ribosomal protein L11</fullName>
    </alternativeName>
</protein>
<sequence length="141" mass="15063">MAKQVTGQAKFQVPGGQATPAPPVGTSLGKYGVNLGQFVQQFNDRTKEYNGTPIPVIVTVYNDRSFDFITKSPPAASMLMQSAGIAKGSGVPNKDKVATVTRAQCEEIAQKKMEDLNARDIDQATRMIEGTARSMGIIVDG</sequence>
<accession>Q7UMY7</accession>
<proteinExistence type="inferred from homology"/>
<keyword id="KW-0488">Methylation</keyword>
<keyword id="KW-1185">Reference proteome</keyword>
<keyword id="KW-0687">Ribonucleoprotein</keyword>
<keyword id="KW-0689">Ribosomal protein</keyword>
<keyword id="KW-0694">RNA-binding</keyword>
<keyword id="KW-0699">rRNA-binding</keyword>
<organism>
    <name type="scientific">Rhodopirellula baltica (strain DSM 10527 / NCIMB 13988 / SH1)</name>
    <dbReference type="NCBI Taxonomy" id="243090"/>
    <lineage>
        <taxon>Bacteria</taxon>
        <taxon>Pseudomonadati</taxon>
        <taxon>Planctomycetota</taxon>
        <taxon>Planctomycetia</taxon>
        <taxon>Pirellulales</taxon>
        <taxon>Pirellulaceae</taxon>
        <taxon>Rhodopirellula</taxon>
    </lineage>
</organism>